<evidence type="ECO:0000250" key="1">
    <source>
        <dbReference type="UniProtKB" id="Q47098"/>
    </source>
</evidence>
<evidence type="ECO:0000269" key="2">
    <source ref="2"/>
</evidence>
<evidence type="ECO:0000303" key="3">
    <source ref="2"/>
</evidence>
<evidence type="ECO:0000305" key="4"/>
<evidence type="ECO:0000312" key="5">
    <source>
        <dbReference type="EMBL" id="AAF12475.1"/>
    </source>
</evidence>
<protein>
    <recommendedName>
        <fullName evidence="3">Hydroxypyruvate/pyruvate aldolase</fullName>
        <shortName evidence="3">HPA/PA aldolase</shortName>
        <ecNumber evidence="2">4.1.2.-</ecNumber>
    </recommendedName>
</protein>
<proteinExistence type="evidence at protein level"/>
<name>HPAAL_DEIRA</name>
<keyword id="KW-0456">Lyase</keyword>
<keyword id="KW-0479">Metal-binding</keyword>
<keyword id="KW-0670">Pyruvate</keyword>
<keyword id="KW-1185">Reference proteome</keyword>
<reference key="1">
    <citation type="journal article" date="1999" name="Science">
        <title>Genome sequence of the radioresistant bacterium Deinococcus radiodurans R1.</title>
        <authorList>
            <person name="White O."/>
            <person name="Eisen J.A."/>
            <person name="Heidelberg J.F."/>
            <person name="Hickey E.K."/>
            <person name="Peterson J.D."/>
            <person name="Dodson R.J."/>
            <person name="Haft D.H."/>
            <person name="Gwinn M.L."/>
            <person name="Nelson W.C."/>
            <person name="Richardson D.L."/>
            <person name="Moffat K.S."/>
            <person name="Qin H."/>
            <person name="Jiang L."/>
            <person name="Pamphile W."/>
            <person name="Crosby M."/>
            <person name="Shen M."/>
            <person name="Vamathevan J.J."/>
            <person name="Lam P."/>
            <person name="McDonald L.A."/>
            <person name="Utterback T.R."/>
            <person name="Zalewski C."/>
            <person name="Makarova K.S."/>
            <person name="Aravind L."/>
            <person name="Daly M.J."/>
            <person name="Minton K.W."/>
            <person name="Fleischmann R.D."/>
            <person name="Ketchum K.A."/>
            <person name="Nelson K.E."/>
            <person name="Salzberg S.L."/>
            <person name="Smith H.O."/>
            <person name="Venter J.C."/>
            <person name="Fraser C.M."/>
        </authorList>
    </citation>
    <scope>NUCLEOTIDE SEQUENCE [LARGE SCALE GENOMIC DNA]</scope>
    <source>
        <strain>ATCC 13939 / DSM 20539 / JCM 16871 / CCUG 27074 / LMG 4051 / NBRC 15346 / NCIMB 9279 / VKM B-1422 / R1</strain>
    </source>
</reference>
<reference key="2">
    <citation type="journal article" date="2017" name="Green Chem.">
        <title>Expanding the reaction space of aldolases using hydroxypyruvate as a nucleophilic substrate.</title>
        <authorList>
            <person name="de Berardinis V."/>
            <person name="Guerard-Helaine C."/>
            <person name="Darii E."/>
            <person name="Bastard K."/>
            <person name="Helaine V."/>
            <person name="Mariage A."/>
            <person name="Petit J.-L."/>
            <person name="Poupard N."/>
            <person name="Sanchez-Moreno I."/>
            <person name="Stam M."/>
            <person name="Gefflaut T."/>
            <person name="Salanoubat M."/>
            <person name="Lemaire M."/>
        </authorList>
    </citation>
    <scope>FUNCTION</scope>
    <scope>CATALYTIC ACTIVITY</scope>
</reference>
<sequence>MPQPMKLDPLSNTFKHALAGGRPQIGLWLGLADPYCAEICAGAGFDWLLIDGEHAPNDVRSTLAQLQALAAYPVAPVVRPPVGDTHLIKQYLDLGVQTLLVPMVDTPEQARQLVQATRYPPQGIRGVGSALARASRWNAVPDYLTRANDEICLLVQVESRLGLENLDEIAAVEGVDGVFIGPADLSASLGHLGHPGHPDVAQAIEDALRRIVGAGKAAGILSADERLARHYLALGATFVAVGVDTTLLARAARTLAASFKDKSREEAEPEPQGGSVY</sequence>
<organism>
    <name type="scientific">Deinococcus radiodurans (strain ATCC 13939 / DSM 20539 / JCM 16871 / CCUG 27074 / LMG 4051 / NBRC 15346 / NCIMB 9279 / VKM B-1422 / R1)</name>
    <dbReference type="NCBI Taxonomy" id="243230"/>
    <lineage>
        <taxon>Bacteria</taxon>
        <taxon>Thermotogati</taxon>
        <taxon>Deinococcota</taxon>
        <taxon>Deinococci</taxon>
        <taxon>Deinococcales</taxon>
        <taxon>Deinococcaceae</taxon>
        <taxon>Deinococcus</taxon>
    </lineage>
</organism>
<gene>
    <name evidence="5" type="ordered locus">DR_A0291</name>
</gene>
<dbReference type="EC" id="4.1.2.-" evidence="2"/>
<dbReference type="EMBL" id="AE001825">
    <property type="protein sequence ID" value="AAF12475.1"/>
    <property type="molecule type" value="Genomic_DNA"/>
</dbReference>
<dbReference type="PIR" id="H75582">
    <property type="entry name" value="H75582"/>
</dbReference>
<dbReference type="RefSeq" id="NP_285614.1">
    <property type="nucleotide sequence ID" value="NC_001264.1"/>
</dbReference>
<dbReference type="RefSeq" id="WP_010889550.1">
    <property type="nucleotide sequence ID" value="NC_001264.1"/>
</dbReference>
<dbReference type="SMR" id="Q9RYM1"/>
<dbReference type="STRING" id="243230.DR_A0291"/>
<dbReference type="PaxDb" id="243230-DR_A0291"/>
<dbReference type="EnsemblBacteria" id="AAF12475">
    <property type="protein sequence ID" value="AAF12475"/>
    <property type="gene ID" value="DR_A0291"/>
</dbReference>
<dbReference type="GeneID" id="69519179"/>
<dbReference type="KEGG" id="dra:DR_A0291"/>
<dbReference type="PATRIC" id="fig|243230.17.peg.3182"/>
<dbReference type="eggNOG" id="COG3836">
    <property type="taxonomic scope" value="Bacteria"/>
</dbReference>
<dbReference type="HOGENOM" id="CLU_059964_1_0_0"/>
<dbReference type="InParanoid" id="Q9RYM1"/>
<dbReference type="OrthoDB" id="86160at2"/>
<dbReference type="Proteomes" id="UP000002524">
    <property type="component" value="Chromosome 2"/>
</dbReference>
<dbReference type="GO" id="GO:0005737">
    <property type="term" value="C:cytoplasm"/>
    <property type="evidence" value="ECO:0000318"/>
    <property type="project" value="GO_Central"/>
</dbReference>
<dbReference type="GO" id="GO:0016832">
    <property type="term" value="F:aldehyde-lyase activity"/>
    <property type="evidence" value="ECO:0000318"/>
    <property type="project" value="GO_Central"/>
</dbReference>
<dbReference type="GO" id="GO:0046872">
    <property type="term" value="F:metal ion binding"/>
    <property type="evidence" value="ECO:0007669"/>
    <property type="project" value="UniProtKB-KW"/>
</dbReference>
<dbReference type="GO" id="GO:0010124">
    <property type="term" value="P:phenylacetate catabolic process"/>
    <property type="evidence" value="ECO:0007669"/>
    <property type="project" value="InterPro"/>
</dbReference>
<dbReference type="FunFam" id="3.20.20.60:FF:000004">
    <property type="entry name" value="5-keto-4-deoxy-D-glucarate aldolase"/>
    <property type="match status" value="1"/>
</dbReference>
<dbReference type="Gene3D" id="3.20.20.60">
    <property type="entry name" value="Phosphoenolpyruvate-binding domains"/>
    <property type="match status" value="1"/>
</dbReference>
<dbReference type="InterPro" id="IPR005000">
    <property type="entry name" value="Aldolase/citrate-lyase_domain"/>
</dbReference>
<dbReference type="InterPro" id="IPR012689">
    <property type="entry name" value="HpaI"/>
</dbReference>
<dbReference type="InterPro" id="IPR050251">
    <property type="entry name" value="HpcH-HpaI_aldolase"/>
</dbReference>
<dbReference type="InterPro" id="IPR015813">
    <property type="entry name" value="Pyrv/PenolPyrv_kinase-like_dom"/>
</dbReference>
<dbReference type="InterPro" id="IPR040442">
    <property type="entry name" value="Pyrv_kinase-like_dom_sf"/>
</dbReference>
<dbReference type="NCBIfam" id="TIGR02311">
    <property type="entry name" value="HpaI"/>
    <property type="match status" value="1"/>
</dbReference>
<dbReference type="PANTHER" id="PTHR30502">
    <property type="entry name" value="2-KETO-3-DEOXY-L-RHAMNONATE ALDOLASE"/>
    <property type="match status" value="1"/>
</dbReference>
<dbReference type="PANTHER" id="PTHR30502:SF0">
    <property type="entry name" value="PHOSPHOENOLPYRUVATE CARBOXYLASE FAMILY PROTEIN"/>
    <property type="match status" value="1"/>
</dbReference>
<dbReference type="Pfam" id="PF03328">
    <property type="entry name" value="HpcH_HpaI"/>
    <property type="match status" value="1"/>
</dbReference>
<dbReference type="SUPFAM" id="SSF51621">
    <property type="entry name" value="Phosphoenolpyruvate/pyruvate domain"/>
    <property type="match status" value="1"/>
</dbReference>
<comment type="function">
    <text evidence="2">Aldolase which can catalyze in vitro the aldolisation reaction between hydroxypyruvate (HPA) or pyruvate (PA) and D-glyceraldehyde (D-GA) (Ref.2). The condensation of hydroxypyruvate and D-glyceraldehyde produces (3R,4S,5R)-3,4,5,6-tetrahydroxy-2-oxohexanoate as the major product, 2-dehydro-D-gluconate and 2-dehydro-D-galactonate (Ref.2). The condensation of pyruvate and D-glyceraldehyde produces 2-dehydro-3-deoxy-L-galactonate as the major product (Ref.2).</text>
</comment>
<comment type="catalytic activity">
    <reaction evidence="2">
        <text>D-glyceraldehyde + 3-hydroxypyruvate = (3R,4S,5R)-3,4,5,6-tetrahydroxy-2-oxohexanoate</text>
        <dbReference type="Rhea" id="RHEA:80047"/>
        <dbReference type="ChEBI" id="CHEBI:17180"/>
        <dbReference type="ChEBI" id="CHEBI:17378"/>
        <dbReference type="ChEBI" id="CHEBI:231434"/>
    </reaction>
</comment>
<comment type="catalytic activity">
    <reaction evidence="2">
        <text>D-glyceraldehyde + 3-hydroxypyruvate = 2-dehydro-D-gluconate</text>
        <dbReference type="Rhea" id="RHEA:80043"/>
        <dbReference type="ChEBI" id="CHEBI:16808"/>
        <dbReference type="ChEBI" id="CHEBI:17180"/>
        <dbReference type="ChEBI" id="CHEBI:17378"/>
    </reaction>
</comment>
<comment type="catalytic activity">
    <reaction evidence="2">
        <text>D-glyceraldehyde + 3-hydroxypyruvate = 2-dehydro-D-galactonate</text>
        <dbReference type="Rhea" id="RHEA:80051"/>
        <dbReference type="ChEBI" id="CHEBI:17180"/>
        <dbReference type="ChEBI" id="CHEBI:17378"/>
        <dbReference type="ChEBI" id="CHEBI:28023"/>
    </reaction>
</comment>
<comment type="catalytic activity">
    <reaction evidence="2">
        <text>D-glyceraldehyde + pyruvate = 2-dehydro-3-deoxy-L-galactonate</text>
        <dbReference type="Rhea" id="RHEA:80055"/>
        <dbReference type="ChEBI" id="CHEBI:15361"/>
        <dbReference type="ChEBI" id="CHEBI:17378"/>
        <dbReference type="ChEBI" id="CHEBI:75545"/>
    </reaction>
</comment>
<comment type="cofactor">
    <cofactor evidence="1">
        <name>a divalent metal cation</name>
        <dbReference type="ChEBI" id="CHEBI:60240"/>
    </cofactor>
</comment>
<comment type="similarity">
    <text evidence="4">Belongs to the HpcH/HpaI aldolase family.</text>
</comment>
<accession>Q9RYM1</accession>
<feature type="chain" id="PRO_0000460950" description="Hydroxypyruvate/pyruvate aldolase">
    <location>
        <begin position="1"/>
        <end position="277"/>
    </location>
</feature>
<feature type="active site" description="Proton acceptor" evidence="1">
    <location>
        <position position="54"/>
    </location>
</feature>
<feature type="binding site" evidence="1">
    <location>
        <position position="158"/>
    </location>
    <ligand>
        <name>a divalent metal cation</name>
        <dbReference type="ChEBI" id="CHEBI:60240"/>
    </ligand>
</feature>
<feature type="binding site" evidence="1">
    <location>
        <position position="184"/>
    </location>
    <ligand>
        <name>a divalent metal cation</name>
        <dbReference type="ChEBI" id="CHEBI:60240"/>
    </ligand>
</feature>
<feature type="site" description="Transition state stabilizer" evidence="1">
    <location>
        <position position="79"/>
    </location>
</feature>
<feature type="site" description="Increases basicity of active site His" evidence="1">
    <location>
        <position position="93"/>
    </location>
</feature>